<keyword id="KW-0997">Cell inner membrane</keyword>
<keyword id="KW-1003">Cell membrane</keyword>
<keyword id="KW-0472">Membrane</keyword>
<keyword id="KW-1185">Reference proteome</keyword>
<keyword id="KW-0812">Transmembrane</keyword>
<keyword id="KW-1133">Transmembrane helix</keyword>
<accession>Q5LUA9</accession>
<evidence type="ECO:0000255" key="1"/>
<evidence type="ECO:0000269" key="2">
    <source>
    </source>
</evidence>
<evidence type="ECO:0000303" key="3">
    <source>
    </source>
</evidence>
<evidence type="ECO:0000305" key="4"/>
<evidence type="ECO:0000305" key="5">
    <source>
    </source>
</evidence>
<evidence type="ECO:0000312" key="6">
    <source>
        <dbReference type="EMBL" id="AAV94445.1"/>
    </source>
</evidence>
<reference key="1">
    <citation type="journal article" date="2004" name="Nature">
        <title>Genome sequence of Silicibacter pomeroyi reveals adaptations to the marine environment.</title>
        <authorList>
            <person name="Moran M.A."/>
            <person name="Buchan A."/>
            <person name="Gonzalez J.M."/>
            <person name="Heidelberg J.F."/>
            <person name="Whitman W.B."/>
            <person name="Kiene R.P."/>
            <person name="Henriksen J.R."/>
            <person name="King G.M."/>
            <person name="Belas R."/>
            <person name="Fuqua C."/>
            <person name="Brinkac L.M."/>
            <person name="Lewis M."/>
            <person name="Johri S."/>
            <person name="Weaver B."/>
            <person name="Pai G."/>
            <person name="Eisen J.A."/>
            <person name="Rahe E."/>
            <person name="Sheldon W.M."/>
            <person name="Ye W."/>
            <person name="Miller T.R."/>
            <person name="Carlton J."/>
            <person name="Rasko D.A."/>
            <person name="Paulsen I.T."/>
            <person name="Ren Q."/>
            <person name="Daugherty S.C."/>
            <person name="DeBoy R.T."/>
            <person name="Dodson R.J."/>
            <person name="Durkin A.S."/>
            <person name="Madupu R."/>
            <person name="Nelson W.C."/>
            <person name="Sullivan S.A."/>
            <person name="Rosovitz M.J."/>
            <person name="Haft D.H."/>
            <person name="Selengut J."/>
            <person name="Ward N."/>
        </authorList>
    </citation>
    <scope>NUCLEOTIDE SEQUENCE [LARGE SCALE GENOMIC DNA]</scope>
    <source>
        <strain>ATCC 700808 / DSM 15171 / DSS-3</strain>
    </source>
</reference>
<reference key="2">
    <citation type="journal article" date="2014" name="Stand. Genomic Sci.">
        <title>An updated genome annotation for the model marine bacterium Ruegeria pomeroyi DSS-3.</title>
        <authorList>
            <person name="Rivers A.R."/>
            <person name="Smith C.B."/>
            <person name="Moran M.A."/>
        </authorList>
    </citation>
    <scope>GENOME REANNOTATION</scope>
    <source>
        <strain>ATCC 700808 / DSM 15171 / DSS-3</strain>
    </source>
</reference>
<reference key="3">
    <citation type="journal article" date="2009" name="J. Mol. Biol.">
        <title>The crystal structure of UehA in complex with ectoine-A comparison with other TRAP-T binding proteins.</title>
        <authorList>
            <person name="Lecher J."/>
            <person name="Pittelkow M."/>
            <person name="Zobel S."/>
            <person name="Bursy J."/>
            <person name="Bonig T."/>
            <person name="Smits S.H."/>
            <person name="Schmitt L."/>
            <person name="Bremer E."/>
        </authorList>
    </citation>
    <scope>PROBABLE FUNCTION</scope>
    <scope>SUBUNIT</scope>
    <source>
        <strain>ATCC 700808 / DSM 15171 / DSS-3</strain>
    </source>
</reference>
<organism>
    <name type="scientific">Ruegeria pomeroyi (strain ATCC 700808 / DSM 15171 / DSS-3)</name>
    <name type="common">Silicibacter pomeroyi</name>
    <dbReference type="NCBI Taxonomy" id="246200"/>
    <lineage>
        <taxon>Bacteria</taxon>
        <taxon>Pseudomonadati</taxon>
        <taxon>Pseudomonadota</taxon>
        <taxon>Alphaproteobacteria</taxon>
        <taxon>Rhodobacterales</taxon>
        <taxon>Roseobacteraceae</taxon>
        <taxon>Ruegeria</taxon>
    </lineage>
</organism>
<protein>
    <recommendedName>
        <fullName evidence="4">Ectoine/5-hydroxyectoine TRAP transporter large permease protein UehC</fullName>
    </recommendedName>
    <alternativeName>
        <fullName evidence="4">Uptake of ectoine and hydroxyectoine protein C</fullName>
    </alternativeName>
</protein>
<dbReference type="EMBL" id="CP000031">
    <property type="protein sequence ID" value="AAV94445.1"/>
    <property type="molecule type" value="Genomic_DNA"/>
</dbReference>
<dbReference type="RefSeq" id="WP_011046892.1">
    <property type="nucleotide sequence ID" value="NC_003911.12"/>
</dbReference>
<dbReference type="SMR" id="Q5LUA9"/>
<dbReference type="STRING" id="246200.SPO1145"/>
<dbReference type="PaxDb" id="246200-SPO1145"/>
<dbReference type="KEGG" id="sil:SPO1145"/>
<dbReference type="eggNOG" id="COG1593">
    <property type="taxonomic scope" value="Bacteria"/>
</dbReference>
<dbReference type="HOGENOM" id="CLU_019824_4_1_5"/>
<dbReference type="OrthoDB" id="9790209at2"/>
<dbReference type="Proteomes" id="UP000001023">
    <property type="component" value="Chromosome"/>
</dbReference>
<dbReference type="GO" id="GO:0005886">
    <property type="term" value="C:plasma membrane"/>
    <property type="evidence" value="ECO:0007669"/>
    <property type="project" value="UniProtKB-SubCell"/>
</dbReference>
<dbReference type="GO" id="GO:0022857">
    <property type="term" value="F:transmembrane transporter activity"/>
    <property type="evidence" value="ECO:0007669"/>
    <property type="project" value="TreeGrafter"/>
</dbReference>
<dbReference type="InterPro" id="IPR010656">
    <property type="entry name" value="DctM"/>
</dbReference>
<dbReference type="InterPro" id="IPR004681">
    <property type="entry name" value="TRAP_DctM"/>
</dbReference>
<dbReference type="NCBIfam" id="TIGR00786">
    <property type="entry name" value="dctM"/>
    <property type="match status" value="1"/>
</dbReference>
<dbReference type="PANTHER" id="PTHR33362:SF5">
    <property type="entry name" value="C4-DICARBOXYLATE TRAP TRANSPORTER LARGE PERMEASE PROTEIN DCTM"/>
    <property type="match status" value="1"/>
</dbReference>
<dbReference type="PANTHER" id="PTHR33362">
    <property type="entry name" value="SIALIC ACID TRAP TRANSPORTER PERMEASE PROTEIN SIAT-RELATED"/>
    <property type="match status" value="1"/>
</dbReference>
<dbReference type="Pfam" id="PF06808">
    <property type="entry name" value="DctM"/>
    <property type="match status" value="1"/>
</dbReference>
<dbReference type="PIRSF" id="PIRSF006066">
    <property type="entry name" value="HI0050"/>
    <property type="match status" value="1"/>
</dbReference>
<name>UEHC_RUEPO</name>
<sequence>MAATIFLTMIVLLLLGFPMMIPLIAGAFIGFLMLFGDLARTETMVQQMLAGIRPASLIAVPMFIFAADIMTRGQSAGRLINVVMAYVGHIRGGLAISTAAACTMFGAVSGSTQATVVAIGSPLRPRMLKAGYKDSFVLALIVNASDIAFLIPPSIGMIIYGVVSSTSIAELFIAGIGPGLLILVLFSAYAYIYAVRNDVPTEPRASWAERARTMRQALWPMGFPVIIIGGIYGGVFSPTEAAAACVLYALVLEVLVFRSMSLADVYDTAKSTGLITAIVFILVGAGAAFSWVISFAQVPQQILGAIGIAEMGPIGVLFVISIAFFIGCMFVDPIVVILVLVPVFAPVVKSVGLDPVLVGTIITLQVAIGSATPPFGCDIFTAIAVFKRPYAEVVRGTPPFILMLLGVSVALIFFPQIALFLRDLAFSK</sequence>
<proteinExistence type="evidence at protein level"/>
<gene>
    <name evidence="3" type="primary">uehC</name>
    <name evidence="6" type="ordered locus">SPO1145</name>
</gene>
<comment type="function">
    <text evidence="5">Part of the tripartite ATP-independent periplasmic (TRAP) transport system UehABC, which imports both ectoine and 5-hydroxyectoine as nutrients, and not as osmoprotectants.</text>
</comment>
<comment type="subunit">
    <text evidence="5">The complex comprises the extracytoplasmic solute receptor protein UehA, and the two transmembrane proteins UehB and UehC.</text>
</comment>
<comment type="subcellular location">
    <subcellularLocation>
        <location evidence="4">Cell inner membrane</location>
        <topology evidence="1">Multi-pass membrane protein</topology>
    </subcellularLocation>
</comment>
<comment type="miscellaneous">
    <text evidence="2">Transport is enhanced in cells that are grown in the presence of ectoine, but not by high-salinity media.</text>
</comment>
<comment type="similarity">
    <text evidence="4">Belongs to the TRAP transporter large permease family.</text>
</comment>
<feature type="chain" id="PRO_0000435357" description="Ectoine/5-hydroxyectoine TRAP transporter large permease protein UehC">
    <location>
        <begin position="1"/>
        <end position="428"/>
    </location>
</feature>
<feature type="transmembrane region" description="Helical" evidence="1">
    <location>
        <begin position="9"/>
        <end position="29"/>
    </location>
</feature>
<feature type="transmembrane region" description="Helical" evidence="1">
    <location>
        <begin position="49"/>
        <end position="69"/>
    </location>
</feature>
<feature type="transmembrane region" description="Helical" evidence="1">
    <location>
        <begin position="99"/>
        <end position="119"/>
    </location>
</feature>
<feature type="transmembrane region" description="Helical" evidence="1">
    <location>
        <begin position="139"/>
        <end position="159"/>
    </location>
</feature>
<feature type="transmembrane region" description="Helical" evidence="1">
    <location>
        <begin position="172"/>
        <end position="192"/>
    </location>
</feature>
<feature type="transmembrane region" description="Helical" evidence="1">
    <location>
        <begin position="217"/>
        <end position="237"/>
    </location>
</feature>
<feature type="transmembrane region" description="Helical" evidence="1">
    <location>
        <begin position="242"/>
        <end position="262"/>
    </location>
</feature>
<feature type="transmembrane region" description="Helical" evidence="1">
    <location>
        <begin position="273"/>
        <end position="293"/>
    </location>
</feature>
<feature type="transmembrane region" description="Helical" evidence="1">
    <location>
        <begin position="302"/>
        <end position="322"/>
    </location>
</feature>
<feature type="transmembrane region" description="Helical" evidence="1">
    <location>
        <begin position="324"/>
        <end position="344"/>
    </location>
</feature>
<feature type="transmembrane region" description="Helical" evidence="1">
    <location>
        <begin position="366"/>
        <end position="386"/>
    </location>
</feature>
<feature type="transmembrane region" description="Helical" evidence="1">
    <location>
        <begin position="400"/>
        <end position="420"/>
    </location>
</feature>